<sequence length="358" mass="40680">MYDRLQAVEDRYDELNELLSDPDVVSDPKRLRDLSKEQSGITATVETYREYKNVNEQINETKELLGEKLDDEMREMAKEEFAELQKEKADLEERLKLLLVPKDPNDDKNVILEIRGAAGGDEAALFAGDLFRMYSKYAESRGWKVEIMDANPTGIGGYKEIIAMMNGNDAFSRMKYENGAHRVQRVPETESGGRIHTSTATVAILPEAEEVEIELHDKDIRTDTFASTGAGGQSVNTTMSAVRLTHIPTGIVVSMQDERSQLKNKDKAMKVLRARVYDKFEREAREEYDANRKSAVGTGDRSERIRTYNYPQNRVTDHRIGLTIQKLDQIMEGKLDEIIDALILEDQTSKLEHLNDAN</sequence>
<name>RF1_LISMH</name>
<dbReference type="EMBL" id="CP001175">
    <property type="protein sequence ID" value="ACK38417.1"/>
    <property type="molecule type" value="Genomic_DNA"/>
</dbReference>
<dbReference type="RefSeq" id="WP_003726351.1">
    <property type="nucleotide sequence ID" value="NC_011660.1"/>
</dbReference>
<dbReference type="SMR" id="B8DBG6"/>
<dbReference type="KEGG" id="lmh:LMHCC_0054"/>
<dbReference type="HOGENOM" id="CLU_036856_0_1_9"/>
<dbReference type="GO" id="GO:0005737">
    <property type="term" value="C:cytoplasm"/>
    <property type="evidence" value="ECO:0007669"/>
    <property type="project" value="UniProtKB-SubCell"/>
</dbReference>
<dbReference type="GO" id="GO:0016149">
    <property type="term" value="F:translation release factor activity, codon specific"/>
    <property type="evidence" value="ECO:0007669"/>
    <property type="project" value="UniProtKB-UniRule"/>
</dbReference>
<dbReference type="FunFam" id="3.30.160.20:FF:000004">
    <property type="entry name" value="Peptide chain release factor 1"/>
    <property type="match status" value="1"/>
</dbReference>
<dbReference type="FunFam" id="3.30.70.1660:FF:000002">
    <property type="entry name" value="Peptide chain release factor 1"/>
    <property type="match status" value="1"/>
</dbReference>
<dbReference type="FunFam" id="3.30.70.1660:FF:000004">
    <property type="entry name" value="Peptide chain release factor 1"/>
    <property type="match status" value="1"/>
</dbReference>
<dbReference type="Gene3D" id="3.30.160.20">
    <property type="match status" value="1"/>
</dbReference>
<dbReference type="Gene3D" id="3.30.70.1660">
    <property type="match status" value="1"/>
</dbReference>
<dbReference type="Gene3D" id="6.10.140.1950">
    <property type="match status" value="1"/>
</dbReference>
<dbReference type="HAMAP" id="MF_00093">
    <property type="entry name" value="Rel_fac_1"/>
    <property type="match status" value="1"/>
</dbReference>
<dbReference type="InterPro" id="IPR005139">
    <property type="entry name" value="PCRF"/>
</dbReference>
<dbReference type="InterPro" id="IPR000352">
    <property type="entry name" value="Pep_chain_release_fac_I"/>
</dbReference>
<dbReference type="InterPro" id="IPR045853">
    <property type="entry name" value="Pep_chain_release_fac_I_sf"/>
</dbReference>
<dbReference type="InterPro" id="IPR050057">
    <property type="entry name" value="Prokaryotic/Mito_RF"/>
</dbReference>
<dbReference type="InterPro" id="IPR004373">
    <property type="entry name" value="RF-1"/>
</dbReference>
<dbReference type="NCBIfam" id="TIGR00019">
    <property type="entry name" value="prfA"/>
    <property type="match status" value="1"/>
</dbReference>
<dbReference type="NCBIfam" id="NF001859">
    <property type="entry name" value="PRK00591.1"/>
    <property type="match status" value="1"/>
</dbReference>
<dbReference type="PANTHER" id="PTHR43804">
    <property type="entry name" value="LD18447P"/>
    <property type="match status" value="1"/>
</dbReference>
<dbReference type="PANTHER" id="PTHR43804:SF7">
    <property type="entry name" value="LD18447P"/>
    <property type="match status" value="1"/>
</dbReference>
<dbReference type="Pfam" id="PF03462">
    <property type="entry name" value="PCRF"/>
    <property type="match status" value="1"/>
</dbReference>
<dbReference type="Pfam" id="PF00472">
    <property type="entry name" value="RF-1"/>
    <property type="match status" value="1"/>
</dbReference>
<dbReference type="SMART" id="SM00937">
    <property type="entry name" value="PCRF"/>
    <property type="match status" value="1"/>
</dbReference>
<dbReference type="SUPFAM" id="SSF75620">
    <property type="entry name" value="Release factor"/>
    <property type="match status" value="1"/>
</dbReference>
<dbReference type="PROSITE" id="PS00745">
    <property type="entry name" value="RF_PROK_I"/>
    <property type="match status" value="1"/>
</dbReference>
<evidence type="ECO:0000255" key="1">
    <source>
        <dbReference type="HAMAP-Rule" id="MF_00093"/>
    </source>
</evidence>
<organism>
    <name type="scientific">Listeria monocytogenes serotype 4a (strain HCC23)</name>
    <dbReference type="NCBI Taxonomy" id="552536"/>
    <lineage>
        <taxon>Bacteria</taxon>
        <taxon>Bacillati</taxon>
        <taxon>Bacillota</taxon>
        <taxon>Bacilli</taxon>
        <taxon>Bacillales</taxon>
        <taxon>Listeriaceae</taxon>
        <taxon>Listeria</taxon>
    </lineage>
</organism>
<protein>
    <recommendedName>
        <fullName evidence="1">Peptide chain release factor 1</fullName>
        <shortName evidence="1">RF-1</shortName>
    </recommendedName>
</protein>
<proteinExistence type="inferred from homology"/>
<comment type="function">
    <text evidence="1">Peptide chain release factor 1 directs the termination of translation in response to the peptide chain termination codons UAG and UAA.</text>
</comment>
<comment type="subcellular location">
    <subcellularLocation>
        <location evidence="1">Cytoplasm</location>
    </subcellularLocation>
</comment>
<comment type="PTM">
    <text evidence="1">Methylated by PrmC. Methylation increases the termination efficiency of RF1.</text>
</comment>
<comment type="similarity">
    <text evidence="1">Belongs to the prokaryotic/mitochondrial release factor family.</text>
</comment>
<feature type="chain" id="PRO_1000193493" description="Peptide chain release factor 1">
    <location>
        <begin position="1"/>
        <end position="358"/>
    </location>
</feature>
<feature type="modified residue" description="N5-methylglutamine" evidence="1">
    <location>
        <position position="233"/>
    </location>
</feature>
<gene>
    <name evidence="1" type="primary">prfA</name>
    <name type="ordered locus">LMHCC_0054</name>
</gene>
<keyword id="KW-0963">Cytoplasm</keyword>
<keyword id="KW-0488">Methylation</keyword>
<keyword id="KW-0648">Protein biosynthesis</keyword>
<accession>B8DBG6</accession>
<reference key="1">
    <citation type="journal article" date="2011" name="J. Bacteriol.">
        <title>Genome sequence of lineage III Listeria monocytogenes strain HCC23.</title>
        <authorList>
            <person name="Steele C.L."/>
            <person name="Donaldson J.R."/>
            <person name="Paul D."/>
            <person name="Banes M.M."/>
            <person name="Arick T."/>
            <person name="Bridges S.M."/>
            <person name="Lawrence M.L."/>
        </authorList>
    </citation>
    <scope>NUCLEOTIDE SEQUENCE [LARGE SCALE GENOMIC DNA]</scope>
    <source>
        <strain>HCC23</strain>
    </source>
</reference>